<comment type="function">
    <text evidence="2">Component of the cytochrome c oxidase, the last enzyme in the mitochondrial electron transport chain which drives oxidative phosphorylation. The respiratory chain contains 3 multisubunit complexes succinate dehydrogenase (complex II, CII), ubiquinol-cytochrome c oxidoreductase (cytochrome b-c1 complex, complex III, CIII) and cytochrome c oxidase (complex IV, CIV), that cooperate to transfer electrons derived from NADH and succinate to molecular oxygen, creating an electrochemical gradient over the inner membrane that drives transmembrane transport and the ATP synthase. Cytochrome c oxidase is the component of the respiratory chain that catalyzes the reduction of oxygen to water. Electrons originating from reduced cytochrome c in the intermembrane space (IMS) are transferred via the dinuclear copper A center (CU(A)) of subunit 2 and heme A of subunit 1 to the active site in subunit 1, a binuclear center (BNC) formed by heme A3 and copper B (CU(B)). The BNC reduces molecular oxygen to 2 water molecules using 4 electrons from cytochrome c in the IMS and 4 protons from the mitochondrial matrix.</text>
</comment>
<comment type="catalytic activity">
    <reaction evidence="2">
        <text>4 Fe(II)-[cytochrome c] + O2 + 8 H(+)(in) = 4 Fe(III)-[cytochrome c] + 2 H2O + 4 H(+)(out)</text>
        <dbReference type="Rhea" id="RHEA:11436"/>
        <dbReference type="Rhea" id="RHEA-COMP:10350"/>
        <dbReference type="Rhea" id="RHEA-COMP:14399"/>
        <dbReference type="ChEBI" id="CHEBI:15377"/>
        <dbReference type="ChEBI" id="CHEBI:15378"/>
        <dbReference type="ChEBI" id="CHEBI:15379"/>
        <dbReference type="ChEBI" id="CHEBI:29033"/>
        <dbReference type="ChEBI" id="CHEBI:29034"/>
        <dbReference type="EC" id="7.1.1.9"/>
    </reaction>
    <physiologicalReaction direction="left-to-right" evidence="2">
        <dbReference type="Rhea" id="RHEA:11437"/>
    </physiologicalReaction>
</comment>
<comment type="subunit">
    <text evidence="1">Component of the cytochrome c oxidase (complex IV, CIV), a multisubunit enzyme composed of 14 subunits. The complex is composed of a catalytic core of 3 subunits MT-CO1, MT-CO2 and MT-CO3, encoded in the mitochondrial DNA, and 11 supernumerary subunits COX4I, COX5A, COX5B, COX6A, COX6B, COX6C, COX7A, COX7B, COX7C, COX8 and NDUFA4, which are encoded in the nuclear genome. The complex exists as a monomer or a dimer and forms supercomplexes (SCs) in the inner mitochondrial membrane with NADH-ubiquinone oxidoreductase (complex I, CI) and ubiquinol-cytochrome c oxidoreductase (cytochrome b-c1 complex, complex III, CIII), resulting in different assemblies (supercomplex SCI(1)III(2)IV(1) and megacomplex MCI(2)III(2)IV(2)).</text>
</comment>
<comment type="subcellular location">
    <subcellularLocation>
        <location evidence="1">Mitochondrion inner membrane</location>
        <topology evidence="1">Multi-pass membrane protein</topology>
    </subcellularLocation>
</comment>
<comment type="similarity">
    <text evidence="3">Belongs to the cytochrome c oxidase subunit 3 family.</text>
</comment>
<sequence>MTHQLHQYHLVDPSPWPLTGAMGSLLLASGLAVWFHTNNTMLLKFGLLTLLLTMFQWWRDIIRESTYQGHHTSGVQKNMRYGMILFITSEVFFFLGFFWALYHVSLVPTPELGAEWPPIGITPLNPMEVPLLNTAVLLSSGATITWSHHTMMKGNKKEATHALMLTIILGAYFTALQLSEYMETPFTIADSVYGSLFFVATGFHGLHVMIGTSFLMVCALRLAKHHFTITHHFGYEAAIWYWHFVDIVWLFLYISVYWWGS</sequence>
<reference key="1">
    <citation type="journal article" date="1998" name="Genetics">
        <title>The complete nucleotide sequence of a snake (Dinodon semicarinatus) mitochondrial genome with two identical control regions.</title>
        <authorList>
            <person name="Kumazawa Y."/>
            <person name="Ota H."/>
            <person name="Nishida M."/>
            <person name="Ozawa T."/>
        </authorList>
    </citation>
    <scope>NUCLEOTIDE SEQUENCE [GENOMIC DNA]</scope>
    <source>
        <tissue>Liver</tissue>
    </source>
</reference>
<dbReference type="EC" id="7.1.1.9"/>
<dbReference type="EMBL" id="AB008539">
    <property type="protein sequence ID" value="BAA33028.1"/>
    <property type="molecule type" value="Genomic_DNA"/>
</dbReference>
<dbReference type="PIR" id="T11094">
    <property type="entry name" value="T11094"/>
</dbReference>
<dbReference type="SMR" id="O79552"/>
<dbReference type="CTD" id="4514"/>
<dbReference type="GO" id="GO:0005743">
    <property type="term" value="C:mitochondrial inner membrane"/>
    <property type="evidence" value="ECO:0007669"/>
    <property type="project" value="UniProtKB-SubCell"/>
</dbReference>
<dbReference type="GO" id="GO:0045277">
    <property type="term" value="C:respiratory chain complex IV"/>
    <property type="evidence" value="ECO:0000250"/>
    <property type="project" value="UniProtKB"/>
</dbReference>
<dbReference type="GO" id="GO:0004129">
    <property type="term" value="F:cytochrome-c oxidase activity"/>
    <property type="evidence" value="ECO:0007669"/>
    <property type="project" value="UniProtKB-EC"/>
</dbReference>
<dbReference type="GO" id="GO:0006123">
    <property type="term" value="P:mitochondrial electron transport, cytochrome c to oxygen"/>
    <property type="evidence" value="ECO:0007669"/>
    <property type="project" value="TreeGrafter"/>
</dbReference>
<dbReference type="CDD" id="cd01665">
    <property type="entry name" value="Cyt_c_Oxidase_III"/>
    <property type="match status" value="1"/>
</dbReference>
<dbReference type="FunFam" id="1.10.287.70:FF:000048">
    <property type="entry name" value="Cytochrome c oxidase subunit 3"/>
    <property type="match status" value="1"/>
</dbReference>
<dbReference type="FunFam" id="1.20.120.80:FF:000002">
    <property type="entry name" value="Cytochrome c oxidase subunit 3"/>
    <property type="match status" value="1"/>
</dbReference>
<dbReference type="Gene3D" id="1.10.287.70">
    <property type="match status" value="1"/>
</dbReference>
<dbReference type="Gene3D" id="1.20.120.80">
    <property type="entry name" value="Cytochrome c oxidase, subunit III, four-helix bundle"/>
    <property type="match status" value="1"/>
</dbReference>
<dbReference type="InterPro" id="IPR024791">
    <property type="entry name" value="Cyt_c/ubiquinol_Oxase_su3"/>
</dbReference>
<dbReference type="InterPro" id="IPR033945">
    <property type="entry name" value="Cyt_c_oxase_su3_dom"/>
</dbReference>
<dbReference type="InterPro" id="IPR000298">
    <property type="entry name" value="Cyt_c_oxidase-like_su3"/>
</dbReference>
<dbReference type="InterPro" id="IPR035973">
    <property type="entry name" value="Cyt_c_oxidase_su3-like_sf"/>
</dbReference>
<dbReference type="InterPro" id="IPR013833">
    <property type="entry name" value="Cyt_c_oxidase_su3_a-hlx"/>
</dbReference>
<dbReference type="PANTHER" id="PTHR11403:SF7">
    <property type="entry name" value="CYTOCHROME C OXIDASE SUBUNIT 3"/>
    <property type="match status" value="1"/>
</dbReference>
<dbReference type="PANTHER" id="PTHR11403">
    <property type="entry name" value="CYTOCHROME C OXIDASE SUBUNIT III"/>
    <property type="match status" value="1"/>
</dbReference>
<dbReference type="Pfam" id="PF00510">
    <property type="entry name" value="COX3"/>
    <property type="match status" value="1"/>
</dbReference>
<dbReference type="SUPFAM" id="SSF81452">
    <property type="entry name" value="Cytochrome c oxidase subunit III-like"/>
    <property type="match status" value="1"/>
</dbReference>
<dbReference type="PROSITE" id="PS50253">
    <property type="entry name" value="COX3"/>
    <property type="match status" value="1"/>
</dbReference>
<name>COX3_LYCSM</name>
<geneLocation type="mitochondrion"/>
<gene>
    <name type="primary">MT-CO3</name>
    <name type="synonym">COIII</name>
    <name type="synonym">COXIII</name>
    <name type="synonym">MTCO3</name>
</gene>
<evidence type="ECO:0000250" key="1">
    <source>
        <dbReference type="UniProtKB" id="P00415"/>
    </source>
</evidence>
<evidence type="ECO:0000250" key="2">
    <source>
        <dbReference type="UniProtKB" id="P00420"/>
    </source>
</evidence>
<evidence type="ECO:0000305" key="3"/>
<feature type="chain" id="PRO_0000183766" description="Cytochrome c oxidase subunit 3">
    <location>
        <begin position="1"/>
        <end position="261"/>
    </location>
</feature>
<feature type="topological domain" description="Mitochondrial matrix" evidence="1">
    <location>
        <begin position="1"/>
        <end position="15"/>
    </location>
</feature>
<feature type="transmembrane region" description="Helical; Name=I" evidence="1">
    <location>
        <begin position="16"/>
        <end position="34"/>
    </location>
</feature>
<feature type="topological domain" description="Mitochondrial intermembrane" evidence="1">
    <location>
        <begin position="35"/>
        <end position="40"/>
    </location>
</feature>
<feature type="transmembrane region" description="Helical; Name=II" evidence="1">
    <location>
        <begin position="41"/>
        <end position="66"/>
    </location>
</feature>
<feature type="topological domain" description="Mitochondrial matrix" evidence="1">
    <location>
        <begin position="67"/>
        <end position="72"/>
    </location>
</feature>
<feature type="transmembrane region" description="Helical; Name=III" evidence="1">
    <location>
        <begin position="73"/>
        <end position="105"/>
    </location>
</feature>
<feature type="topological domain" description="Mitochondrial intermembrane" evidence="1">
    <location>
        <begin position="106"/>
        <end position="128"/>
    </location>
</feature>
<feature type="transmembrane region" description="Helical; Name=IV" evidence="1">
    <location>
        <begin position="129"/>
        <end position="152"/>
    </location>
</feature>
<feature type="topological domain" description="Mitochondrial matrix" evidence="1">
    <location>
        <begin position="153"/>
        <end position="155"/>
    </location>
</feature>
<feature type="transmembrane region" description="Helical; Name=V" evidence="1">
    <location>
        <begin position="156"/>
        <end position="183"/>
    </location>
</feature>
<feature type="topological domain" description="Mitochondrial intermembrane" evidence="1">
    <location>
        <begin position="184"/>
        <end position="190"/>
    </location>
</feature>
<feature type="transmembrane region" description="Helical; Name=VI" evidence="1">
    <location>
        <begin position="191"/>
        <end position="223"/>
    </location>
</feature>
<feature type="topological domain" description="Mitochondrial matrix" evidence="1">
    <location>
        <begin position="224"/>
        <end position="232"/>
    </location>
</feature>
<feature type="transmembrane region" description="Helical; Name=VII" evidence="1">
    <location>
        <begin position="233"/>
        <end position="256"/>
    </location>
</feature>
<feature type="topological domain" description="Mitochondrial intermembrane" evidence="1">
    <location>
        <begin position="257"/>
        <end position="261"/>
    </location>
</feature>
<accession>O79552</accession>
<organism>
    <name type="scientific">Lycodon semicarinatus</name>
    <name type="common">Ryukyu odd-tooth snake</name>
    <name type="synonym">Eumesodon semicarinatus</name>
    <dbReference type="NCBI Taxonomy" id="56549"/>
    <lineage>
        <taxon>Eukaryota</taxon>
        <taxon>Metazoa</taxon>
        <taxon>Chordata</taxon>
        <taxon>Craniata</taxon>
        <taxon>Vertebrata</taxon>
        <taxon>Euteleostomi</taxon>
        <taxon>Lepidosauria</taxon>
        <taxon>Squamata</taxon>
        <taxon>Bifurcata</taxon>
        <taxon>Unidentata</taxon>
        <taxon>Episquamata</taxon>
        <taxon>Toxicofera</taxon>
        <taxon>Serpentes</taxon>
        <taxon>Colubroidea</taxon>
        <taxon>Colubridae</taxon>
        <taxon>Colubrinae</taxon>
        <taxon>Lycodon</taxon>
    </lineage>
</organism>
<proteinExistence type="inferred from homology"/>
<keyword id="KW-0472">Membrane</keyword>
<keyword id="KW-0496">Mitochondrion</keyword>
<keyword id="KW-0999">Mitochondrion inner membrane</keyword>
<keyword id="KW-1278">Translocase</keyword>
<keyword id="KW-0812">Transmembrane</keyword>
<keyword id="KW-1133">Transmembrane helix</keyword>
<protein>
    <recommendedName>
        <fullName>Cytochrome c oxidase subunit 3</fullName>
        <ecNumber>7.1.1.9</ecNumber>
    </recommendedName>
    <alternativeName>
        <fullName>Cytochrome c oxidase polypeptide III</fullName>
    </alternativeName>
</protein>